<proteinExistence type="inferred from homology"/>
<gene>
    <name type="ordered locus">Ken-113</name>
</gene>
<dbReference type="EC" id="3.6.1.74"/>
<dbReference type="EC" id="2.7.7.50"/>
<dbReference type="EC" id="2.1.1.56"/>
<dbReference type="EMBL" id="AY261360">
    <property type="status" value="NOT_ANNOTATED_CDS"/>
    <property type="molecule type" value="Genomic_DNA"/>
</dbReference>
<dbReference type="UniPathway" id="UPA00922"/>
<dbReference type="Proteomes" id="UP000000861">
    <property type="component" value="Segment"/>
</dbReference>
<dbReference type="GO" id="GO:0044423">
    <property type="term" value="C:virion component"/>
    <property type="evidence" value="ECO:0007669"/>
    <property type="project" value="UniProtKB-KW"/>
</dbReference>
<dbReference type="GO" id="GO:0005525">
    <property type="term" value="F:GTP binding"/>
    <property type="evidence" value="ECO:0007669"/>
    <property type="project" value="UniProtKB-KW"/>
</dbReference>
<dbReference type="GO" id="GO:0004482">
    <property type="term" value="F:mRNA 5'-cap (guanine-N7-)-methyltransferase activity"/>
    <property type="evidence" value="ECO:0007669"/>
    <property type="project" value="UniProtKB-EC"/>
</dbReference>
<dbReference type="GO" id="GO:0140818">
    <property type="term" value="F:mRNA 5'-triphosphate monophosphatase activity"/>
    <property type="evidence" value="ECO:0007669"/>
    <property type="project" value="RHEA"/>
</dbReference>
<dbReference type="GO" id="GO:0004484">
    <property type="term" value="F:mRNA guanylyltransferase activity"/>
    <property type="evidence" value="ECO:0007669"/>
    <property type="project" value="UniProtKB-EC"/>
</dbReference>
<dbReference type="GO" id="GO:0004651">
    <property type="term" value="F:polynucleotide 5'-phosphatase activity"/>
    <property type="evidence" value="ECO:0007669"/>
    <property type="project" value="UniProtKB-EC"/>
</dbReference>
<dbReference type="GO" id="GO:0003723">
    <property type="term" value="F:RNA binding"/>
    <property type="evidence" value="ECO:0007669"/>
    <property type="project" value="UniProtKB-KW"/>
</dbReference>
<dbReference type="CDD" id="cd02440">
    <property type="entry name" value="AdoMet_MTases"/>
    <property type="match status" value="1"/>
</dbReference>
<dbReference type="Gene3D" id="3.30.470.30">
    <property type="entry name" value="DNA ligase/mRNA capping enzyme"/>
    <property type="match status" value="1"/>
</dbReference>
<dbReference type="Gene3D" id="3.40.50.150">
    <property type="entry name" value="Vaccinia Virus protein VP39"/>
    <property type="match status" value="1"/>
</dbReference>
<dbReference type="InterPro" id="IPR033469">
    <property type="entry name" value="CYTH-like_dom_sf"/>
</dbReference>
<dbReference type="InterPro" id="IPR004971">
    <property type="entry name" value="mRNA_G-N7_MeTrfase_dom"/>
</dbReference>
<dbReference type="InterPro" id="IPR039753">
    <property type="entry name" value="RG7MT1"/>
</dbReference>
<dbReference type="InterPro" id="IPR029063">
    <property type="entry name" value="SAM-dependent_MTases_sf"/>
</dbReference>
<dbReference type="PANTHER" id="PTHR12189:SF2">
    <property type="entry name" value="MRNA CAP GUANINE-N7 METHYLTRANSFERASE"/>
    <property type="match status" value="1"/>
</dbReference>
<dbReference type="PANTHER" id="PTHR12189">
    <property type="entry name" value="MRNA GUANINE-7- METHYLTRANSFERASE"/>
    <property type="match status" value="1"/>
</dbReference>
<dbReference type="Pfam" id="PF03291">
    <property type="entry name" value="mRNA_G-N7_MeTrfase"/>
    <property type="match status" value="1"/>
</dbReference>
<dbReference type="SUPFAM" id="SSF55154">
    <property type="entry name" value="CYTH-like phosphatases"/>
    <property type="match status" value="1"/>
</dbReference>
<dbReference type="SUPFAM" id="SSF56091">
    <property type="entry name" value="DNA ligase/mRNA capping enzyme, catalytic domain"/>
    <property type="match status" value="1"/>
</dbReference>
<dbReference type="SUPFAM" id="SSF53335">
    <property type="entry name" value="S-adenosyl-L-methionine-dependent methyltransferases"/>
    <property type="match status" value="1"/>
</dbReference>
<dbReference type="PROSITE" id="PS51562">
    <property type="entry name" value="RNA_CAP0_MT"/>
    <property type="match status" value="1"/>
</dbReference>
<name>MCE_ASFK5</name>
<evidence type="ECO:0000250" key="1">
    <source>
        <dbReference type="UniProtKB" id="P04298"/>
    </source>
</evidence>
<evidence type="ECO:0000250" key="2">
    <source>
        <dbReference type="UniProtKB" id="P32094"/>
    </source>
</evidence>
<evidence type="ECO:0000255" key="3">
    <source>
        <dbReference type="PROSITE-ProRule" id="PRU00895"/>
    </source>
</evidence>
<evidence type="ECO:0000305" key="4"/>
<comment type="function">
    <text evidence="2">Probably catalyzes the second reaction in the mRNA cap formation pathway. Forms a covalent complex with GTP.</text>
</comment>
<comment type="catalytic activity">
    <reaction evidence="1">
        <text>a 5'-end triphospho-ribonucleoside in mRNA + H2O = a 5'-end diphospho-ribonucleoside in mRNA + phosphate + H(+)</text>
        <dbReference type="Rhea" id="RHEA:67004"/>
        <dbReference type="Rhea" id="RHEA-COMP:17164"/>
        <dbReference type="Rhea" id="RHEA-COMP:17165"/>
        <dbReference type="ChEBI" id="CHEBI:15377"/>
        <dbReference type="ChEBI" id="CHEBI:15378"/>
        <dbReference type="ChEBI" id="CHEBI:43474"/>
        <dbReference type="ChEBI" id="CHEBI:167616"/>
        <dbReference type="ChEBI" id="CHEBI:167618"/>
        <dbReference type="EC" id="3.6.1.74"/>
    </reaction>
    <physiologicalReaction direction="left-to-right" evidence="1">
        <dbReference type="Rhea" id="RHEA:67005"/>
    </physiologicalReaction>
</comment>
<comment type="catalytic activity">
    <reaction evidence="2">
        <text>a 5'-end diphospho-ribonucleoside in mRNA + GTP + H(+) = a 5'-end (5'-triphosphoguanosine)-ribonucleoside in mRNA + diphosphate</text>
        <dbReference type="Rhea" id="RHEA:67012"/>
        <dbReference type="Rhea" id="RHEA-COMP:17165"/>
        <dbReference type="Rhea" id="RHEA-COMP:17166"/>
        <dbReference type="ChEBI" id="CHEBI:15378"/>
        <dbReference type="ChEBI" id="CHEBI:33019"/>
        <dbReference type="ChEBI" id="CHEBI:37565"/>
        <dbReference type="ChEBI" id="CHEBI:167616"/>
        <dbReference type="ChEBI" id="CHEBI:167617"/>
        <dbReference type="EC" id="2.7.7.50"/>
    </reaction>
</comment>
<comment type="catalytic activity">
    <reaction evidence="3">
        <text>a 5'-end (5'-triphosphoguanosine)-ribonucleoside in mRNA + S-adenosyl-L-methionine = a 5'-end (N(7)-methyl 5'-triphosphoguanosine)-ribonucleoside in mRNA + S-adenosyl-L-homocysteine</text>
        <dbReference type="Rhea" id="RHEA:67008"/>
        <dbReference type="Rhea" id="RHEA-COMP:17166"/>
        <dbReference type="Rhea" id="RHEA-COMP:17167"/>
        <dbReference type="ChEBI" id="CHEBI:57856"/>
        <dbReference type="ChEBI" id="CHEBI:59789"/>
        <dbReference type="ChEBI" id="CHEBI:156461"/>
        <dbReference type="ChEBI" id="CHEBI:167617"/>
        <dbReference type="EC" id="2.1.1.56"/>
    </reaction>
</comment>
<comment type="pathway">
    <text>mRNA processing; mRNA capping.</text>
</comment>
<comment type="subunit">
    <text evidence="2">Part of the viral DNA-directed RNA polymerase that consists of 8 polII-like subunits (RPB1, RPB2, RPB3, RPB5, RPB6, RPB7, RPB9, RPB10), a capping enzyme and a termination factor.</text>
</comment>
<comment type="subcellular location">
    <subcellularLocation>
        <location evidence="2">Virion</location>
    </subcellularLocation>
    <text evidence="2">Found in association with viral nucleoid.</text>
</comment>
<comment type="induction">
    <text evidence="4">Expressed in the early phase of the viral replicative cycle.</text>
</comment>
<comment type="domain">
    <text evidence="2">The N-terminus contains the mRNA 5'-triphosphatase domain, the central part contains the mRNA guanylyltransferase, and C-terminus contains the methyltransferase domain.</text>
</comment>
<comment type="similarity">
    <text evidence="4">In the N-terminal section; belongs to the dsDNA virus mRNA guanylyltransferase family.</text>
</comment>
<comment type="similarity">
    <text evidence="3">In the C-terminal section; belongs to the class I-like SAM-binding methyltransferase superfamily. mRNA cap 0 methyltransferase family.</text>
</comment>
<protein>
    <recommendedName>
        <fullName>mRNA-capping enzyme</fullName>
    </recommendedName>
    <alternativeName>
        <fullName>VTF/CE</fullName>
    </alternativeName>
    <domain>
        <recommendedName>
            <fullName>Polynucleotide 5'-triphosphatase</fullName>
            <ecNumber>3.6.1.74</ecNumber>
        </recommendedName>
        <alternativeName>
            <fullName>mRNA 5'-triphosphatase</fullName>
            <shortName>TPase</shortName>
        </alternativeName>
    </domain>
    <domain>
        <recommendedName>
            <fullName>mRNA guanylyltransferase</fullName>
            <ecNumber>2.7.7.50</ecNumber>
        </recommendedName>
        <alternativeName>
            <fullName>GTP--RNA guanylyltransferase</fullName>
            <shortName>GTase</shortName>
        </alternativeName>
    </domain>
    <domain>
        <recommendedName>
            <fullName>mRNA (guanine-N(7))-methyltransferase</fullName>
            <ecNumber>2.1.1.56</ecNumber>
        </recommendedName>
    </domain>
</protein>
<feature type="chain" id="PRO_0000373095" description="mRNA-capping enzyme">
    <location>
        <begin position="1"/>
        <end position="868"/>
    </location>
</feature>
<feature type="domain" description="mRNA cap 0 methyltransferase" evidence="3">
    <location>
        <begin position="594"/>
        <end position="868"/>
    </location>
</feature>
<feature type="active site" description="N6-GMP-lysine intermediate" evidence="2">
    <location>
        <position position="282"/>
    </location>
</feature>
<feature type="binding site" evidence="3">
    <location>
        <position position="607"/>
    </location>
    <ligand>
        <name>S-adenosyl-L-methionine</name>
        <dbReference type="ChEBI" id="CHEBI:59789"/>
    </ligand>
</feature>
<feature type="binding site" evidence="3">
    <location>
        <position position="624"/>
    </location>
    <ligand>
        <name>S-adenosyl-L-methionine</name>
        <dbReference type="ChEBI" id="CHEBI:59789"/>
    </ligand>
</feature>
<feature type="binding site" evidence="3">
    <location>
        <position position="646"/>
    </location>
    <ligand>
        <name>S-adenosyl-L-methionine</name>
        <dbReference type="ChEBI" id="CHEBI:59789"/>
    </ligand>
</feature>
<feature type="binding site" evidence="3">
    <location>
        <begin position="710"/>
        <end position="712"/>
    </location>
    <ligand>
        <name>S-adenosyl-L-methionine</name>
        <dbReference type="ChEBI" id="CHEBI:59789"/>
    </ligand>
</feature>
<feature type="site" description="mRNA cap binding" evidence="3">
    <location>
        <position position="627"/>
    </location>
</feature>
<feature type="site" description="mRNA cap binding" evidence="3">
    <location>
        <position position="658"/>
    </location>
</feature>
<feature type="site" description="mRNA cap binding" evidence="3">
    <location>
        <position position="713"/>
    </location>
</feature>
<feature type="site" description="mRNA cap binding" evidence="3">
    <location>
        <position position="806"/>
    </location>
</feature>
<keyword id="KW-0244">Early protein</keyword>
<keyword id="KW-0342">GTP-binding</keyword>
<keyword id="KW-0378">Hydrolase</keyword>
<keyword id="KW-0489">Methyltransferase</keyword>
<keyword id="KW-0506">mRNA capping</keyword>
<keyword id="KW-0507">mRNA processing</keyword>
<keyword id="KW-0547">Nucleotide-binding</keyword>
<keyword id="KW-0548">Nucleotidyltransferase</keyword>
<keyword id="KW-0694">RNA-binding</keyword>
<keyword id="KW-0949">S-adenosyl-L-methionine</keyword>
<keyword id="KW-0808">Transferase</keyword>
<keyword id="KW-0946">Virion</keyword>
<accession>P0C995</accession>
<reference key="1">
    <citation type="submission" date="2003-03" db="EMBL/GenBank/DDBJ databases">
        <title>African swine fever virus genomes.</title>
        <authorList>
            <person name="Kutish G.F."/>
            <person name="Rock D.L."/>
        </authorList>
    </citation>
    <scope>NUCLEOTIDE SEQUENCE [LARGE SCALE GENOMIC DNA]</scope>
</reference>
<sequence>MASLENLVARYQRCFNDQSLKNSTIELEIRFQHINFLLFKTVYEALVAQEIPSTISHSIRCIKKVHHENHCREKILPSDNFYFKKQPLMFFKFSEPASLGCKVSLAIEQPIRKFILDSSVLVRLKNRTTFQISDLWKIELTVVKQLMGSEVSAKLTAFKTLLFDTPEQQTAKNMMTLINPDDEYLYEIEIEYTGKPESLTAADVIKIKNTVLTLISPNHLMLTAYHQAIEFIASHILSSEILLARIKSGKWGLKRLLPQVKSMTKADYMKFYPPVGYYVTDKADGIRGIAVIQDTQMYVVADQLYSLGTTGIEPLKPTILDGEFMPEKKEFYGFDVIMYEGNLLTQQGFETRIEALNKGIKVLQAFNIKAEMKPFISLTSADPNVLLKNFESVFKKKTRPYSIDGIILVEPGNSYLNTNTFKWKPTWDNTLDFLVRKCPESLNVPEYAPKKGFSLHLLFVGISGELFKKLALNWCPGYTKLFPVTQRNQNYFPVQFQPSDFPLAFLYYHPDTSSFSDIDGKVLEMRCLKREVNYVSWEIVKIREDRQQDLKTGGYFGNDFKTAELTWLNYMDPFSFEELAKGPSGMYFAGAKTGIYRAQTALISFIKQEIIQKISHQSWVIDLGIGKGQDLGRYLDAGIRHLVGIDKDQTALAELIYRKFSHATTRQHKHATNIYVLHQDLAEPAKEISEKVHQIYGFPKEGASSIVSNLFIHYLMKSSQQVENLAVLCHKLLQPGGMVWFTTMLGERVLELLHENRVELNEVWEARENEVVKFAIKRLFKEDVLQETGQEIGVLLPFSNGDFYNEYLVNTAFLIKIFKHHGFSLVQMQSFKDWIPEFQTFSKSLYKILTEADKTWTSLFGFICLRKN</sequence>
<organismHost>
    <name type="scientific">Ornithodoros</name>
    <name type="common">relapsing fever ticks</name>
    <dbReference type="NCBI Taxonomy" id="6937"/>
</organismHost>
<organismHost>
    <name type="scientific">Phacochoerus aethiopicus</name>
    <name type="common">Warthog</name>
    <dbReference type="NCBI Taxonomy" id="85517"/>
</organismHost>
<organismHost>
    <name type="scientific">Phacochoerus africanus</name>
    <name type="common">Warthog</name>
    <dbReference type="NCBI Taxonomy" id="41426"/>
</organismHost>
<organismHost>
    <name type="scientific">Potamochoerus larvatus</name>
    <name type="common">Bushpig</name>
    <dbReference type="NCBI Taxonomy" id="273792"/>
</organismHost>
<organismHost>
    <name type="scientific">Sus scrofa</name>
    <name type="common">Pig</name>
    <dbReference type="NCBI Taxonomy" id="9823"/>
</organismHost>
<organism>
    <name type="scientific">African swine fever virus (isolate Pig/Kenya/KEN-50/1950)</name>
    <name type="common">ASFV</name>
    <dbReference type="NCBI Taxonomy" id="561445"/>
    <lineage>
        <taxon>Viruses</taxon>
        <taxon>Varidnaviria</taxon>
        <taxon>Bamfordvirae</taxon>
        <taxon>Nucleocytoviricota</taxon>
        <taxon>Pokkesviricetes</taxon>
        <taxon>Asfuvirales</taxon>
        <taxon>Asfarviridae</taxon>
        <taxon>Asfivirus</taxon>
        <taxon>African swine fever virus</taxon>
    </lineage>
</organism>